<evidence type="ECO:0000255" key="1">
    <source>
        <dbReference type="HAMAP-Rule" id="MF_01445"/>
    </source>
</evidence>
<name>TSAD_RICB8</name>
<proteinExistence type="inferred from homology"/>
<feature type="chain" id="PRO_1000024445" description="tRNA N6-adenosine threonylcarbamoyltransferase">
    <location>
        <begin position="1"/>
        <end position="341"/>
    </location>
</feature>
<feature type="binding site" evidence="1">
    <location>
        <position position="112"/>
    </location>
    <ligand>
        <name>Fe cation</name>
        <dbReference type="ChEBI" id="CHEBI:24875"/>
    </ligand>
</feature>
<feature type="binding site" evidence="1">
    <location>
        <position position="116"/>
    </location>
    <ligand>
        <name>Fe cation</name>
        <dbReference type="ChEBI" id="CHEBI:24875"/>
    </ligand>
</feature>
<feature type="binding site" evidence="1">
    <location>
        <begin position="134"/>
        <end position="138"/>
    </location>
    <ligand>
        <name>substrate</name>
    </ligand>
</feature>
<feature type="binding site" evidence="1">
    <location>
        <position position="167"/>
    </location>
    <ligand>
        <name>substrate</name>
    </ligand>
</feature>
<feature type="binding site" evidence="1">
    <location>
        <position position="180"/>
    </location>
    <ligand>
        <name>substrate</name>
    </ligand>
</feature>
<feature type="binding site" evidence="1">
    <location>
        <position position="279"/>
    </location>
    <ligand>
        <name>substrate</name>
    </ligand>
</feature>
<feature type="binding site" evidence="1">
    <location>
        <position position="307"/>
    </location>
    <ligand>
        <name>Fe cation</name>
        <dbReference type="ChEBI" id="CHEBI:24875"/>
    </ligand>
</feature>
<comment type="function">
    <text evidence="1">Required for the formation of a threonylcarbamoyl group on adenosine at position 37 (t(6)A37) in tRNAs that read codons beginning with adenine. Is involved in the transfer of the threonylcarbamoyl moiety of threonylcarbamoyl-AMP (TC-AMP) to the N6 group of A37, together with TsaE and TsaB. TsaD likely plays a direct catalytic role in this reaction.</text>
</comment>
<comment type="catalytic activity">
    <reaction evidence="1">
        <text>L-threonylcarbamoyladenylate + adenosine(37) in tRNA = N(6)-L-threonylcarbamoyladenosine(37) in tRNA + AMP + H(+)</text>
        <dbReference type="Rhea" id="RHEA:37059"/>
        <dbReference type="Rhea" id="RHEA-COMP:10162"/>
        <dbReference type="Rhea" id="RHEA-COMP:10163"/>
        <dbReference type="ChEBI" id="CHEBI:15378"/>
        <dbReference type="ChEBI" id="CHEBI:73682"/>
        <dbReference type="ChEBI" id="CHEBI:74411"/>
        <dbReference type="ChEBI" id="CHEBI:74418"/>
        <dbReference type="ChEBI" id="CHEBI:456215"/>
        <dbReference type="EC" id="2.3.1.234"/>
    </reaction>
</comment>
<comment type="cofactor">
    <cofactor evidence="1">
        <name>Fe(2+)</name>
        <dbReference type="ChEBI" id="CHEBI:29033"/>
    </cofactor>
    <text evidence="1">Binds 1 Fe(2+) ion per subunit.</text>
</comment>
<comment type="subcellular location">
    <subcellularLocation>
        <location evidence="1">Cytoplasm</location>
    </subcellularLocation>
</comment>
<comment type="similarity">
    <text evidence="1">Belongs to the KAE1 / TsaD family.</text>
</comment>
<keyword id="KW-0012">Acyltransferase</keyword>
<keyword id="KW-0963">Cytoplasm</keyword>
<keyword id="KW-0408">Iron</keyword>
<keyword id="KW-0479">Metal-binding</keyword>
<keyword id="KW-0808">Transferase</keyword>
<keyword id="KW-0819">tRNA processing</keyword>
<reference key="1">
    <citation type="submission" date="2007-09" db="EMBL/GenBank/DDBJ databases">
        <title>Complete genome sequencing of Rickettsia bellii.</title>
        <authorList>
            <person name="Madan A."/>
            <person name="Lee H."/>
            <person name="Madan A."/>
            <person name="Yoon J.-G."/>
            <person name="Ryu G.-Y."/>
            <person name="Dasch G."/>
            <person name="Ereemeva M."/>
        </authorList>
    </citation>
    <scope>NUCLEOTIDE SEQUENCE [LARGE SCALE GENOMIC DNA]</scope>
    <source>
        <strain>OSU 85-389</strain>
    </source>
</reference>
<organism>
    <name type="scientific">Rickettsia bellii (strain OSU 85-389)</name>
    <dbReference type="NCBI Taxonomy" id="391896"/>
    <lineage>
        <taxon>Bacteria</taxon>
        <taxon>Pseudomonadati</taxon>
        <taxon>Pseudomonadota</taxon>
        <taxon>Alphaproteobacteria</taxon>
        <taxon>Rickettsiales</taxon>
        <taxon>Rickettsiaceae</taxon>
        <taxon>Rickettsieae</taxon>
        <taxon>Rickettsia</taxon>
        <taxon>belli group</taxon>
    </lineage>
</organism>
<sequence length="341" mass="37006">MKKILGIESSCDDTSVSIITEDREILSNIVISQNTEHADYKGVVPEIAARSHLANLEKAMKQALLESNTSLDEITAIAATSGPGLIGGVIVGSMFAKSLSSVLNKPFIAVNHLEGHALTARLTDNIPYPYLLLLASGGHCQFVAVLGLGKYKILGSTIDDAVGEAFDKVAKMLDLPFPGGPKIEKRAKLGDPYKYKFPKPIINSGDCNMSFSGLKTAVRTLIMSLQEINDTIINDIAASFQFTIGEILSSKILEAIKVYEQITNDFNRNIVIAGGVAANKYLQELLSNCTKIHGYQLIYPPTTLCTDNAAMIAYAGLERYNNGLFTPLNFCPKARWSLEEI</sequence>
<dbReference type="EC" id="2.3.1.234" evidence="1"/>
<dbReference type="EMBL" id="CP000849">
    <property type="protein sequence ID" value="ABV78595.1"/>
    <property type="molecule type" value="Genomic_DNA"/>
</dbReference>
<dbReference type="RefSeq" id="WP_011477913.1">
    <property type="nucleotide sequence ID" value="NC_009883.1"/>
</dbReference>
<dbReference type="SMR" id="A8GU95"/>
<dbReference type="KEGG" id="rbo:A1I_00985"/>
<dbReference type="HOGENOM" id="CLU_023208_0_2_5"/>
<dbReference type="GO" id="GO:0005737">
    <property type="term" value="C:cytoplasm"/>
    <property type="evidence" value="ECO:0007669"/>
    <property type="project" value="UniProtKB-SubCell"/>
</dbReference>
<dbReference type="GO" id="GO:0005506">
    <property type="term" value="F:iron ion binding"/>
    <property type="evidence" value="ECO:0007669"/>
    <property type="project" value="UniProtKB-UniRule"/>
</dbReference>
<dbReference type="GO" id="GO:0061711">
    <property type="term" value="F:N(6)-L-threonylcarbamoyladenine synthase activity"/>
    <property type="evidence" value="ECO:0007669"/>
    <property type="project" value="UniProtKB-EC"/>
</dbReference>
<dbReference type="GO" id="GO:0002949">
    <property type="term" value="P:tRNA threonylcarbamoyladenosine modification"/>
    <property type="evidence" value="ECO:0007669"/>
    <property type="project" value="UniProtKB-UniRule"/>
</dbReference>
<dbReference type="CDD" id="cd24133">
    <property type="entry name" value="ASKHA_NBD_TsaD_bac"/>
    <property type="match status" value="1"/>
</dbReference>
<dbReference type="FunFam" id="3.30.420.40:FF:000012">
    <property type="entry name" value="tRNA N6-adenosine threonylcarbamoyltransferase"/>
    <property type="match status" value="1"/>
</dbReference>
<dbReference type="Gene3D" id="3.30.420.40">
    <property type="match status" value="2"/>
</dbReference>
<dbReference type="HAMAP" id="MF_01445">
    <property type="entry name" value="TsaD"/>
    <property type="match status" value="1"/>
</dbReference>
<dbReference type="InterPro" id="IPR043129">
    <property type="entry name" value="ATPase_NBD"/>
</dbReference>
<dbReference type="InterPro" id="IPR000905">
    <property type="entry name" value="Gcp-like_dom"/>
</dbReference>
<dbReference type="InterPro" id="IPR017861">
    <property type="entry name" value="KAE1/TsaD"/>
</dbReference>
<dbReference type="InterPro" id="IPR017860">
    <property type="entry name" value="Peptidase_M22_CS"/>
</dbReference>
<dbReference type="InterPro" id="IPR022450">
    <property type="entry name" value="TsaD"/>
</dbReference>
<dbReference type="NCBIfam" id="TIGR00329">
    <property type="entry name" value="gcp_kae1"/>
    <property type="match status" value="1"/>
</dbReference>
<dbReference type="NCBIfam" id="TIGR03723">
    <property type="entry name" value="T6A_TsaD_YgjD"/>
    <property type="match status" value="1"/>
</dbReference>
<dbReference type="PANTHER" id="PTHR11735">
    <property type="entry name" value="TRNA N6-ADENOSINE THREONYLCARBAMOYLTRANSFERASE"/>
    <property type="match status" value="1"/>
</dbReference>
<dbReference type="PANTHER" id="PTHR11735:SF6">
    <property type="entry name" value="TRNA N6-ADENOSINE THREONYLCARBAMOYLTRANSFERASE, MITOCHONDRIAL"/>
    <property type="match status" value="1"/>
</dbReference>
<dbReference type="Pfam" id="PF00814">
    <property type="entry name" value="TsaD"/>
    <property type="match status" value="1"/>
</dbReference>
<dbReference type="PRINTS" id="PR00789">
    <property type="entry name" value="OSIALOPTASE"/>
</dbReference>
<dbReference type="SUPFAM" id="SSF53067">
    <property type="entry name" value="Actin-like ATPase domain"/>
    <property type="match status" value="2"/>
</dbReference>
<dbReference type="PROSITE" id="PS01016">
    <property type="entry name" value="GLYCOPROTEASE"/>
    <property type="match status" value="1"/>
</dbReference>
<accession>A8GU95</accession>
<gene>
    <name evidence="1" type="primary">tsaD</name>
    <name type="synonym">gcp</name>
    <name type="ordered locus">A1I_00985</name>
</gene>
<protein>
    <recommendedName>
        <fullName evidence="1">tRNA N6-adenosine threonylcarbamoyltransferase</fullName>
        <ecNumber evidence="1">2.3.1.234</ecNumber>
    </recommendedName>
    <alternativeName>
        <fullName evidence="1">N6-L-threonylcarbamoyladenine synthase</fullName>
        <shortName evidence="1">t(6)A synthase</shortName>
    </alternativeName>
    <alternativeName>
        <fullName evidence="1">t(6)A37 threonylcarbamoyladenosine biosynthesis protein TsaD</fullName>
    </alternativeName>
    <alternativeName>
        <fullName evidence="1">tRNA threonylcarbamoyladenosine biosynthesis protein TsaD</fullName>
    </alternativeName>
</protein>